<sequence length="226" mass="26393">MLTYETWEENETKGALSVLSWAYKEYKSEIVYACSFGVEGMVLLDLINQVNPSAKVVFLDTNVHFQETYELIQKVRERFPSLNIIEKQPKLTLDEQDKLHGDKLWESNPNLCCKIRKILPLEESLANEKAWISGLRREQSETRKHTKFINQDHRFQSIKVCPLIHWTWKEVWRYVYKHSLPYNSLHDIGYPSIGCEKCTLPVGEGGDSRDGRWAGKVKTECGLHYQ</sequence>
<name>CYSH_BACAC</name>
<gene>
    <name evidence="1" type="primary">cysH</name>
    <name type="ordered locus">BAMEG_3152</name>
</gene>
<accession>C3L9N6</accession>
<keyword id="KW-0963">Cytoplasm</keyword>
<keyword id="KW-0408">Iron</keyword>
<keyword id="KW-0411">Iron-sulfur</keyword>
<keyword id="KW-0479">Metal-binding</keyword>
<keyword id="KW-0560">Oxidoreductase</keyword>
<comment type="function">
    <text evidence="1">Catalyzes the formation of sulfite from adenosine 5'-phosphosulfate (APS) using thioredoxin as an electron donor.</text>
</comment>
<comment type="catalytic activity">
    <reaction evidence="1">
        <text>[thioredoxin]-disulfide + sulfite + AMP + 2 H(+) = adenosine 5'-phosphosulfate + [thioredoxin]-dithiol</text>
        <dbReference type="Rhea" id="RHEA:21976"/>
        <dbReference type="Rhea" id="RHEA-COMP:10698"/>
        <dbReference type="Rhea" id="RHEA-COMP:10700"/>
        <dbReference type="ChEBI" id="CHEBI:15378"/>
        <dbReference type="ChEBI" id="CHEBI:17359"/>
        <dbReference type="ChEBI" id="CHEBI:29950"/>
        <dbReference type="ChEBI" id="CHEBI:50058"/>
        <dbReference type="ChEBI" id="CHEBI:58243"/>
        <dbReference type="ChEBI" id="CHEBI:456215"/>
        <dbReference type="EC" id="1.8.4.10"/>
    </reaction>
</comment>
<comment type="cofactor">
    <cofactor evidence="1">
        <name>[4Fe-4S] cluster</name>
        <dbReference type="ChEBI" id="CHEBI:49883"/>
    </cofactor>
    <text evidence="1">Binds 1 [4Fe-4S] cluster per subunit.</text>
</comment>
<comment type="pathway">
    <text evidence="1">Sulfur metabolism; hydrogen sulfide biosynthesis; sulfite from sulfate.</text>
</comment>
<comment type="subcellular location">
    <subcellularLocation>
        <location evidence="1">Cytoplasm</location>
    </subcellularLocation>
</comment>
<comment type="similarity">
    <text evidence="1">Belongs to the PAPS reductase family. CysH subfamily.</text>
</comment>
<proteinExistence type="inferred from homology"/>
<protein>
    <recommendedName>
        <fullName evidence="1">Adenosine 5'-phosphosulfate reductase</fullName>
        <shortName evidence="1">APS reductase</shortName>
        <ecNumber evidence="1">1.8.4.10</ecNumber>
    </recommendedName>
    <alternativeName>
        <fullName evidence="1">5'-adenylylsulfate reductase</fullName>
    </alternativeName>
    <alternativeName>
        <fullName evidence="1">Thioredoxin-dependent 5'-adenylylsulfate reductase</fullName>
    </alternativeName>
</protein>
<reference key="1">
    <citation type="submission" date="2008-10" db="EMBL/GenBank/DDBJ databases">
        <title>Genome sequence of Bacillus anthracis str. CDC 684.</title>
        <authorList>
            <person name="Dodson R.J."/>
            <person name="Munk A.C."/>
            <person name="Brettin T."/>
            <person name="Bruce D."/>
            <person name="Detter C."/>
            <person name="Tapia R."/>
            <person name="Han C."/>
            <person name="Sutton G."/>
            <person name="Sims D."/>
        </authorList>
    </citation>
    <scope>NUCLEOTIDE SEQUENCE [LARGE SCALE GENOMIC DNA]</scope>
    <source>
        <strain>CDC 684 / NRRL 3495</strain>
    </source>
</reference>
<organism>
    <name type="scientific">Bacillus anthracis (strain CDC 684 / NRRL 3495)</name>
    <dbReference type="NCBI Taxonomy" id="568206"/>
    <lineage>
        <taxon>Bacteria</taxon>
        <taxon>Bacillati</taxon>
        <taxon>Bacillota</taxon>
        <taxon>Bacilli</taxon>
        <taxon>Bacillales</taxon>
        <taxon>Bacillaceae</taxon>
        <taxon>Bacillus</taxon>
        <taxon>Bacillus cereus group</taxon>
    </lineage>
</organism>
<evidence type="ECO:0000255" key="1">
    <source>
        <dbReference type="HAMAP-Rule" id="MF_00063"/>
    </source>
</evidence>
<dbReference type="EC" id="1.8.4.10" evidence="1"/>
<dbReference type="EMBL" id="CP001215">
    <property type="protein sequence ID" value="ACP14326.1"/>
    <property type="molecule type" value="Genomic_DNA"/>
</dbReference>
<dbReference type="RefSeq" id="WP_000958999.1">
    <property type="nucleotide sequence ID" value="NC_012581.1"/>
</dbReference>
<dbReference type="SMR" id="C3L9N6"/>
<dbReference type="GeneID" id="45021420"/>
<dbReference type="KEGG" id="bah:BAMEG_3152"/>
<dbReference type="HOGENOM" id="CLU_044089_2_1_9"/>
<dbReference type="GO" id="GO:0005737">
    <property type="term" value="C:cytoplasm"/>
    <property type="evidence" value="ECO:0007669"/>
    <property type="project" value="UniProtKB-SubCell"/>
</dbReference>
<dbReference type="GO" id="GO:0051539">
    <property type="term" value="F:4 iron, 4 sulfur cluster binding"/>
    <property type="evidence" value="ECO:0007669"/>
    <property type="project" value="UniProtKB-UniRule"/>
</dbReference>
<dbReference type="GO" id="GO:0043866">
    <property type="term" value="F:adenylyl-sulfate reductase (thioredoxin) activity"/>
    <property type="evidence" value="ECO:0007669"/>
    <property type="project" value="UniProtKB-EC"/>
</dbReference>
<dbReference type="GO" id="GO:0046872">
    <property type="term" value="F:metal ion binding"/>
    <property type="evidence" value="ECO:0007669"/>
    <property type="project" value="UniProtKB-KW"/>
</dbReference>
<dbReference type="GO" id="GO:0004604">
    <property type="term" value="F:phosphoadenylyl-sulfate reductase (thioredoxin) activity"/>
    <property type="evidence" value="ECO:0007669"/>
    <property type="project" value="UniProtKB-UniRule"/>
</dbReference>
<dbReference type="GO" id="GO:0019344">
    <property type="term" value="P:cysteine biosynthetic process"/>
    <property type="evidence" value="ECO:0007669"/>
    <property type="project" value="InterPro"/>
</dbReference>
<dbReference type="GO" id="GO:0070814">
    <property type="term" value="P:hydrogen sulfide biosynthetic process"/>
    <property type="evidence" value="ECO:0007669"/>
    <property type="project" value="UniProtKB-UniRule"/>
</dbReference>
<dbReference type="GO" id="GO:0019379">
    <property type="term" value="P:sulfate assimilation, phosphoadenylyl sulfate reduction by phosphoadenylyl-sulfate reductase (thioredoxin)"/>
    <property type="evidence" value="ECO:0007669"/>
    <property type="project" value="UniProtKB-UniRule"/>
</dbReference>
<dbReference type="CDD" id="cd23945">
    <property type="entry name" value="PAPS_reductase"/>
    <property type="match status" value="1"/>
</dbReference>
<dbReference type="FunFam" id="3.40.50.620:FF:000095">
    <property type="entry name" value="Phosphoadenosine phosphosulfate reductase"/>
    <property type="match status" value="1"/>
</dbReference>
<dbReference type="Gene3D" id="3.40.50.620">
    <property type="entry name" value="HUPs"/>
    <property type="match status" value="1"/>
</dbReference>
<dbReference type="HAMAP" id="MF_00063">
    <property type="entry name" value="CysH"/>
    <property type="match status" value="1"/>
</dbReference>
<dbReference type="InterPro" id="IPR011798">
    <property type="entry name" value="APS_reductase"/>
</dbReference>
<dbReference type="InterPro" id="IPR004511">
    <property type="entry name" value="PAPS/APS_Rdtase"/>
</dbReference>
<dbReference type="InterPro" id="IPR002500">
    <property type="entry name" value="PAPS_reduct_dom"/>
</dbReference>
<dbReference type="InterPro" id="IPR014729">
    <property type="entry name" value="Rossmann-like_a/b/a_fold"/>
</dbReference>
<dbReference type="NCBIfam" id="TIGR02055">
    <property type="entry name" value="APS_reductase"/>
    <property type="match status" value="1"/>
</dbReference>
<dbReference type="NCBIfam" id="TIGR00434">
    <property type="entry name" value="cysH"/>
    <property type="match status" value="1"/>
</dbReference>
<dbReference type="NCBIfam" id="NF002537">
    <property type="entry name" value="PRK02090.1"/>
    <property type="match status" value="1"/>
</dbReference>
<dbReference type="PANTHER" id="PTHR46509">
    <property type="entry name" value="PHOSPHOADENOSINE PHOSPHOSULFATE REDUCTASE"/>
    <property type="match status" value="1"/>
</dbReference>
<dbReference type="PANTHER" id="PTHR46509:SF1">
    <property type="entry name" value="PHOSPHOADENOSINE PHOSPHOSULFATE REDUCTASE"/>
    <property type="match status" value="1"/>
</dbReference>
<dbReference type="Pfam" id="PF01507">
    <property type="entry name" value="PAPS_reduct"/>
    <property type="match status" value="1"/>
</dbReference>
<dbReference type="PIRSF" id="PIRSF000857">
    <property type="entry name" value="PAPS_reductase"/>
    <property type="match status" value="1"/>
</dbReference>
<dbReference type="SUPFAM" id="SSF52402">
    <property type="entry name" value="Adenine nucleotide alpha hydrolases-like"/>
    <property type="match status" value="1"/>
</dbReference>
<feature type="chain" id="PRO_1000117922" description="Adenosine 5'-phosphosulfate reductase">
    <location>
        <begin position="1"/>
        <end position="226"/>
    </location>
</feature>
<feature type="active site" description="Nucleophile; cysteine thiosulfonate intermediate" evidence="1">
    <location>
        <position position="221"/>
    </location>
</feature>
<feature type="binding site" evidence="1">
    <location>
        <position position="112"/>
    </location>
    <ligand>
        <name>[4Fe-4S] cluster</name>
        <dbReference type="ChEBI" id="CHEBI:49883"/>
    </ligand>
</feature>
<feature type="binding site" evidence="1">
    <location>
        <position position="113"/>
    </location>
    <ligand>
        <name>[4Fe-4S] cluster</name>
        <dbReference type="ChEBI" id="CHEBI:49883"/>
    </ligand>
</feature>
<feature type="binding site" evidence="1">
    <location>
        <position position="195"/>
    </location>
    <ligand>
        <name>[4Fe-4S] cluster</name>
        <dbReference type="ChEBI" id="CHEBI:49883"/>
    </ligand>
</feature>
<feature type="binding site" evidence="1">
    <location>
        <position position="198"/>
    </location>
    <ligand>
        <name>[4Fe-4S] cluster</name>
        <dbReference type="ChEBI" id="CHEBI:49883"/>
    </ligand>
</feature>